<dbReference type="EC" id="3.5.1.44" evidence="1"/>
<dbReference type="EMBL" id="CP001581">
    <property type="protein sequence ID" value="ACO85163.1"/>
    <property type="molecule type" value="Genomic_DNA"/>
</dbReference>
<dbReference type="RefSeq" id="WP_003359122.1">
    <property type="nucleotide sequence ID" value="NC_012563.1"/>
</dbReference>
<dbReference type="SMR" id="C1FUE9"/>
<dbReference type="KEGG" id="cby:CLM_3117"/>
<dbReference type="eggNOG" id="COG1871">
    <property type="taxonomic scope" value="Bacteria"/>
</dbReference>
<dbReference type="HOGENOM" id="CLU_087854_2_0_9"/>
<dbReference type="Proteomes" id="UP000001374">
    <property type="component" value="Chromosome"/>
</dbReference>
<dbReference type="GO" id="GO:0050568">
    <property type="term" value="F:protein-glutamine glutaminase activity"/>
    <property type="evidence" value="ECO:0007669"/>
    <property type="project" value="UniProtKB-UniRule"/>
</dbReference>
<dbReference type="GO" id="GO:0006935">
    <property type="term" value="P:chemotaxis"/>
    <property type="evidence" value="ECO:0007669"/>
    <property type="project" value="UniProtKB-UniRule"/>
</dbReference>
<dbReference type="CDD" id="cd16352">
    <property type="entry name" value="CheD"/>
    <property type="match status" value="1"/>
</dbReference>
<dbReference type="Gene3D" id="3.30.1330.200">
    <property type="match status" value="1"/>
</dbReference>
<dbReference type="HAMAP" id="MF_01440">
    <property type="entry name" value="CheD"/>
    <property type="match status" value="1"/>
</dbReference>
<dbReference type="InterPro" id="IPR038592">
    <property type="entry name" value="CheD-like_sf"/>
</dbReference>
<dbReference type="InterPro" id="IPR005659">
    <property type="entry name" value="Chemorcpt_Glu_NH3ase_CheD"/>
</dbReference>
<dbReference type="InterPro" id="IPR011324">
    <property type="entry name" value="Cytotoxic_necrot_fac-like_cat"/>
</dbReference>
<dbReference type="NCBIfam" id="NF010015">
    <property type="entry name" value="PRK13490.1"/>
    <property type="match status" value="1"/>
</dbReference>
<dbReference type="PANTHER" id="PTHR35147">
    <property type="entry name" value="CHEMORECEPTOR GLUTAMINE DEAMIDASE CHED-RELATED"/>
    <property type="match status" value="1"/>
</dbReference>
<dbReference type="PANTHER" id="PTHR35147:SF1">
    <property type="entry name" value="CHEMORECEPTOR GLUTAMINE DEAMIDASE CHED-RELATED"/>
    <property type="match status" value="1"/>
</dbReference>
<dbReference type="Pfam" id="PF03975">
    <property type="entry name" value="CheD"/>
    <property type="match status" value="1"/>
</dbReference>
<dbReference type="SUPFAM" id="SSF64438">
    <property type="entry name" value="CNF1/YfiH-like putative cysteine hydrolases"/>
    <property type="match status" value="1"/>
</dbReference>
<sequence>MDIKEIKVGIADLNVGKNPDKIITVGLGSCIGIALYDGIKCIGGLSHIMLPDSTQFSKVTNPMKFADLAIPILVEKMEKLGARKNGLKAKICGGASMFNFSDKSMVMDIGNRNGKAVKEKLKELSIPLLAEDIGGNKGRTMIFDTSTGKVYIKTVGLGTKEI</sequence>
<feature type="chain" id="PRO_1000184923" description="Probable chemoreceptor glutamine deamidase CheD">
    <location>
        <begin position="1"/>
        <end position="162"/>
    </location>
</feature>
<organism>
    <name type="scientific">Clostridium botulinum (strain Kyoto / Type A2)</name>
    <dbReference type="NCBI Taxonomy" id="536232"/>
    <lineage>
        <taxon>Bacteria</taxon>
        <taxon>Bacillati</taxon>
        <taxon>Bacillota</taxon>
        <taxon>Clostridia</taxon>
        <taxon>Eubacteriales</taxon>
        <taxon>Clostridiaceae</taxon>
        <taxon>Clostridium</taxon>
    </lineage>
</organism>
<evidence type="ECO:0000255" key="1">
    <source>
        <dbReference type="HAMAP-Rule" id="MF_01440"/>
    </source>
</evidence>
<reference key="1">
    <citation type="submission" date="2008-10" db="EMBL/GenBank/DDBJ databases">
        <title>Genome sequence of Clostridium botulinum A2 Kyoto.</title>
        <authorList>
            <person name="Shrivastava S."/>
            <person name="Brinkac L.M."/>
            <person name="Brown J.L."/>
            <person name="Bruce D."/>
            <person name="Detter C.C."/>
            <person name="Johnson E.A."/>
            <person name="Munk C.A."/>
            <person name="Smith L.A."/>
            <person name="Smith T.J."/>
            <person name="Sutton G."/>
            <person name="Brettin T.S."/>
        </authorList>
    </citation>
    <scope>NUCLEOTIDE SEQUENCE [LARGE SCALE GENOMIC DNA]</scope>
    <source>
        <strain>Kyoto / Type A2</strain>
    </source>
</reference>
<proteinExistence type="inferred from homology"/>
<protein>
    <recommendedName>
        <fullName evidence="1">Probable chemoreceptor glutamine deamidase CheD</fullName>
        <ecNumber evidence="1">3.5.1.44</ecNumber>
    </recommendedName>
</protein>
<keyword id="KW-0145">Chemotaxis</keyword>
<keyword id="KW-0378">Hydrolase</keyword>
<name>CHED_CLOBJ</name>
<comment type="function">
    <text evidence="1">Probably deamidates glutamine residues to glutamate on methyl-accepting chemotaxis receptors (MCPs), playing an important role in chemotaxis.</text>
</comment>
<comment type="catalytic activity">
    <reaction evidence="1">
        <text>L-glutaminyl-[protein] + H2O = L-glutamyl-[protein] + NH4(+)</text>
        <dbReference type="Rhea" id="RHEA:16441"/>
        <dbReference type="Rhea" id="RHEA-COMP:10207"/>
        <dbReference type="Rhea" id="RHEA-COMP:10208"/>
        <dbReference type="ChEBI" id="CHEBI:15377"/>
        <dbReference type="ChEBI" id="CHEBI:28938"/>
        <dbReference type="ChEBI" id="CHEBI:29973"/>
        <dbReference type="ChEBI" id="CHEBI:30011"/>
        <dbReference type="EC" id="3.5.1.44"/>
    </reaction>
</comment>
<comment type="similarity">
    <text evidence="1">Belongs to the CheD family.</text>
</comment>
<gene>
    <name evidence="1" type="primary">cheD</name>
    <name type="ordered locus">CLM_3117</name>
</gene>
<accession>C1FUE9</accession>